<keyword id="KW-0568">Pathogenesis-related protein</keyword>
<keyword id="KW-0611">Plant defense</keyword>
<keyword id="KW-0732">Signal</keyword>
<comment type="similarity">
    <text evidence="2">Belongs to the thaumatin family.</text>
</comment>
<organism>
    <name type="scientific">Hordeum vulgare</name>
    <name type="common">Barley</name>
    <dbReference type="NCBI Taxonomy" id="4513"/>
    <lineage>
        <taxon>Eukaryota</taxon>
        <taxon>Viridiplantae</taxon>
        <taxon>Streptophyta</taxon>
        <taxon>Embryophyta</taxon>
        <taxon>Tracheophyta</taxon>
        <taxon>Spermatophyta</taxon>
        <taxon>Magnoliopsida</taxon>
        <taxon>Liliopsida</taxon>
        <taxon>Poales</taxon>
        <taxon>Poaceae</taxon>
        <taxon>BOP clade</taxon>
        <taxon>Pooideae</taxon>
        <taxon>Triticodae</taxon>
        <taxon>Triticeae</taxon>
        <taxon>Hordeinae</taxon>
        <taxon>Hordeum</taxon>
    </lineage>
</organism>
<dbReference type="EMBL" id="X58564">
    <property type="protein sequence ID" value="CAA41444.1"/>
    <property type="molecule type" value="mRNA"/>
</dbReference>
<dbReference type="EMBL" id="X58566">
    <property type="protein sequence ID" value="CAA41446.1"/>
    <property type="molecule type" value="mRNA"/>
</dbReference>
<dbReference type="PIR" id="S18034">
    <property type="entry name" value="S18034"/>
</dbReference>
<dbReference type="SMR" id="P32937"/>
<dbReference type="OMA" id="SCYAPIC"/>
<dbReference type="GO" id="GO:0006952">
    <property type="term" value="P:defense response"/>
    <property type="evidence" value="ECO:0007669"/>
    <property type="project" value="UniProtKB-KW"/>
</dbReference>
<dbReference type="CDD" id="cd09217">
    <property type="entry name" value="TLP-P"/>
    <property type="match status" value="1"/>
</dbReference>
<dbReference type="Gene3D" id="2.60.110.10">
    <property type="entry name" value="Thaumatin"/>
    <property type="match status" value="1"/>
</dbReference>
<dbReference type="InterPro" id="IPR037176">
    <property type="entry name" value="Osmotin/thaumatin-like_sf"/>
</dbReference>
<dbReference type="InterPro" id="IPR001938">
    <property type="entry name" value="Thaumatin"/>
</dbReference>
<dbReference type="InterPro" id="IPR017949">
    <property type="entry name" value="Thaumatin_CS"/>
</dbReference>
<dbReference type="PANTHER" id="PTHR31048">
    <property type="entry name" value="OS03G0233200 PROTEIN"/>
    <property type="match status" value="1"/>
</dbReference>
<dbReference type="Pfam" id="PF00314">
    <property type="entry name" value="Thaumatin"/>
    <property type="match status" value="1"/>
</dbReference>
<dbReference type="PIRSF" id="PIRSF002703">
    <property type="entry name" value="Thaumatin"/>
    <property type="match status" value="1"/>
</dbReference>
<dbReference type="PRINTS" id="PR00347">
    <property type="entry name" value="THAUMATIN"/>
</dbReference>
<dbReference type="SMART" id="SM00205">
    <property type="entry name" value="THN"/>
    <property type="match status" value="1"/>
</dbReference>
<dbReference type="SUPFAM" id="SSF49870">
    <property type="entry name" value="Osmotin, thaumatin-like protein"/>
    <property type="match status" value="1"/>
</dbReference>
<dbReference type="PROSITE" id="PS00316">
    <property type="entry name" value="THAUMATIN_1"/>
    <property type="match status" value="1"/>
</dbReference>
<dbReference type="PROSITE" id="PS51367">
    <property type="entry name" value="THAUMATIN_2"/>
    <property type="match status" value="1"/>
</dbReference>
<sequence length="173" mass="17548">MSTSAVLFLLLAVFAAGASAATFNIKNNCGSTIWPAGIPVGGGFELGSGQTSSINVPAGTQAGRIWARTGCSFNGGSGSCQTGDCGGQLSCSLSGQPPATLAEFTIGGGSTQDFYDISVIDGFNLAMDFSCSTGDALQCRDPSCPPPQAYQHPNDVATHACSGNNNYQITFCP</sequence>
<feature type="signal peptide" evidence="1">
    <location>
        <begin position="1"/>
        <end position="20"/>
    </location>
</feature>
<feature type="chain" id="PRO_0000034026" description="Pathogenesis-related protein 1A/1B">
    <location>
        <begin position="21"/>
        <end position="173"/>
    </location>
</feature>
<evidence type="ECO:0000255" key="1"/>
<evidence type="ECO:0000255" key="2">
    <source>
        <dbReference type="PROSITE-ProRule" id="PRU00699"/>
    </source>
</evidence>
<proteinExistence type="evidence at transcript level"/>
<reference key="1">
    <citation type="journal article" date="1993" name="Mol. Plant Microbe Interact.">
        <title>Cultivar-specific elicitation of barley defense reactions by the phytotoxic peptide NIP1 from Rhynchosporium secalis.</title>
        <authorList>
            <person name="Hahn M."/>
            <person name="Lehnackers H."/>
            <person name="Knogge W."/>
        </authorList>
    </citation>
    <scope>NUCLEOTIDE SEQUENCE [MRNA]</scope>
    <source>
        <tissue>Leaf</tissue>
    </source>
</reference>
<name>PR1A_HORVU</name>
<protein>
    <recommendedName>
        <fullName>Pathogenesis-related protein 1A/1B</fullName>
    </recommendedName>
</protein>
<accession>P32937</accession>